<keyword id="KW-0945">Host-virus interaction</keyword>
<keyword id="KW-1185">Reference proteome</keyword>
<keyword id="KW-1198">Viral budding</keyword>
<keyword id="KW-1187">Viral budding via the host ESCRT complexes</keyword>
<keyword id="KW-0261">Viral envelope protein</keyword>
<keyword id="KW-0468">Viral matrix protein</keyword>
<keyword id="KW-1188">Viral release from host cell</keyword>
<keyword id="KW-0946">Virion</keyword>
<evidence type="ECO:0000250" key="1"/>
<evidence type="ECO:0000305" key="2"/>
<sequence>MDSSRTIGLYFDSAHSSSNLLAFPIVLQDTGDGKKQIAPQYRIQRLDLWTDSKEDSVFITTYGFIFQVGNEEATVGIIDDKPKRELLSAAMLCLGSVPNTGDLIELARACLTMMVTCKKSATNTERMVFSVVQAPQVLQSCRVVANKYSSVNAVKHVKAPEKIPGSGTLEYKVNFVSLTVVPKKDVYKIPAAVLKISGSSLYNLALNVTINVEVDPRSPLVKSLSKSDSGYYANLFLHIGLMTTVDRKGKKVTFDKLEKKIRSLDLSVGLSDVLGPSVLVKARGARTKLLAPFFSSSGTACYPIANASPQVAKILWSQTACLRSVKIIIQAGTQRAVAVTADHEVTSTKLEKGHTLAKYNPFKK</sequence>
<feature type="chain" id="PRO_0000390628" description="Matrix protein">
    <location>
        <begin position="1"/>
        <end position="364"/>
    </location>
</feature>
<feature type="short sequence motif" description="FPIV motif" evidence="1">
    <location>
        <begin position="23"/>
        <end position="26"/>
    </location>
</feature>
<dbReference type="EMBL" id="AF309418">
    <property type="protein sequence ID" value="AAG36981.1"/>
    <property type="molecule type" value="Genomic_RNA"/>
</dbReference>
<dbReference type="RefSeq" id="NP_071468.1">
    <property type="nucleotide sequence ID" value="NC_002617.1"/>
</dbReference>
<dbReference type="SMR" id="Q9DLD5"/>
<dbReference type="Proteomes" id="UP000002328">
    <property type="component" value="Segment"/>
</dbReference>
<dbReference type="GO" id="GO:0019031">
    <property type="term" value="C:viral envelope"/>
    <property type="evidence" value="ECO:0007669"/>
    <property type="project" value="UniProtKB-KW"/>
</dbReference>
<dbReference type="GO" id="GO:0039660">
    <property type="term" value="F:structural constituent of virion"/>
    <property type="evidence" value="ECO:0007669"/>
    <property type="project" value="UniProtKB-KW"/>
</dbReference>
<dbReference type="GO" id="GO:0039702">
    <property type="term" value="P:viral budding via host ESCRT complex"/>
    <property type="evidence" value="ECO:0007669"/>
    <property type="project" value="UniProtKB-KW"/>
</dbReference>
<dbReference type="FunFam" id="2.70.20.50:FF:000002">
    <property type="entry name" value="Matrix protein"/>
    <property type="match status" value="1"/>
</dbReference>
<dbReference type="FunFam" id="2.70.20.60:FF:000002">
    <property type="entry name" value="Matrix protein"/>
    <property type="match status" value="1"/>
</dbReference>
<dbReference type="Gene3D" id="2.70.20.60">
    <property type="entry name" value="Viral matrix protein, C-terminal domain"/>
    <property type="match status" value="1"/>
</dbReference>
<dbReference type="Gene3D" id="2.70.20.50">
    <property type="entry name" value="Viral matrix protein, N-terminal domain"/>
    <property type="match status" value="1"/>
</dbReference>
<dbReference type="InterPro" id="IPR042539">
    <property type="entry name" value="Matrix_C"/>
</dbReference>
<dbReference type="InterPro" id="IPR042540">
    <property type="entry name" value="Matrix_N"/>
</dbReference>
<dbReference type="InterPro" id="IPR055413">
    <property type="entry name" value="Matrix_Paramyxo_C"/>
</dbReference>
<dbReference type="InterPro" id="IPR000982">
    <property type="entry name" value="Matrix_Paramyxo_N"/>
</dbReference>
<dbReference type="Pfam" id="PF23765">
    <property type="entry name" value="Matrix_Paramyxo_C"/>
    <property type="match status" value="1"/>
</dbReference>
<dbReference type="Pfam" id="PF00661">
    <property type="entry name" value="Matrix_Paramyxo_N"/>
    <property type="match status" value="1"/>
</dbReference>
<organismHost>
    <name type="scientific">Gallus gallus</name>
    <name type="common">Chicken</name>
    <dbReference type="NCBI Taxonomy" id="9031"/>
</organismHost>
<organism>
    <name type="scientific">Newcastle disease virus (strain Chicken/United States/B1/48)</name>
    <name type="common">NDV</name>
    <dbReference type="NCBI Taxonomy" id="652953"/>
    <lineage>
        <taxon>Viruses</taxon>
        <taxon>Riboviria</taxon>
        <taxon>Orthornavirae</taxon>
        <taxon>Negarnaviricota</taxon>
        <taxon>Haploviricotina</taxon>
        <taxon>Monjiviricetes</taxon>
        <taxon>Mononegavirales</taxon>
        <taxon>Paramyxoviridae</taxon>
        <taxon>Avulavirinae</taxon>
        <taxon>Orthoavulavirus</taxon>
        <taxon>Orthoavulavirus javaense</taxon>
        <taxon>Avian paramyxovirus 1</taxon>
    </lineage>
</organism>
<proteinExistence type="inferred from homology"/>
<gene>
    <name type="primary">M</name>
</gene>
<comment type="function">
    <text evidence="1">The M protein has a crucial role in virus assembly and interacts with the RNP complex as well as with the viral membrane.</text>
</comment>
<comment type="subcellular location">
    <subcellularLocation>
        <location evidence="2">Virion</location>
    </subcellularLocation>
</comment>
<comment type="domain">
    <text evidence="1">Late-budding domains (L domains) are short sequence motifs essential for viral particle budding. They recruit proteins of the host ESCRT machinery (Endosomal Sorting Complex Required for Transport) or ESCRT-associated proteins. The matrix protein contains one L domain: a FPIV motif (By similarity).</text>
</comment>
<comment type="similarity">
    <text evidence="2">Belongs to the morbillivirus/respirovirus/rubulavirus M protein family.</text>
</comment>
<name>MATRX_NDVB1</name>
<protein>
    <recommendedName>
        <fullName>Matrix protein</fullName>
    </recommendedName>
</protein>
<reference key="1">
    <citation type="submission" date="2000-09" db="EMBL/GenBank/DDBJ databases">
        <title>Complete sequence for the B1 strain of Newcastle disease virus.</title>
        <authorList>
            <person name="Sellers H.S."/>
            <person name="Seal B.S."/>
        </authorList>
    </citation>
    <scope>NUCLEOTIDE SEQUENCE [GENOMIC RNA]</scope>
</reference>
<accession>Q9DLD5</accession>